<dbReference type="EC" id="1.14.99.62" evidence="3 4"/>
<dbReference type="EMBL" id="AB448947">
    <property type="protein sequence ID" value="BAI44340.1"/>
    <property type="molecule type" value="Genomic_DNA"/>
</dbReference>
<dbReference type="SMR" id="C9K1X7"/>
<dbReference type="KEGG" id="ag:BAI44340"/>
<dbReference type="BioCyc" id="MetaCyc:MONOMER-18588"/>
<dbReference type="BRENDA" id="1.14.99.62">
    <property type="organism ID" value="13958"/>
</dbReference>
<dbReference type="GO" id="GO:0020037">
    <property type="term" value="F:heme binding"/>
    <property type="evidence" value="ECO:0007669"/>
    <property type="project" value="InterPro"/>
</dbReference>
<dbReference type="GO" id="GO:0005506">
    <property type="term" value="F:iron ion binding"/>
    <property type="evidence" value="ECO:0007669"/>
    <property type="project" value="InterPro"/>
</dbReference>
<dbReference type="GO" id="GO:0004497">
    <property type="term" value="F:monooxygenase activity"/>
    <property type="evidence" value="ECO:0007669"/>
    <property type="project" value="UniProtKB-KW"/>
</dbReference>
<dbReference type="GO" id="GO:0016705">
    <property type="term" value="F:oxidoreductase activity, acting on paired donors, with incorporation or reduction of molecular oxygen"/>
    <property type="evidence" value="ECO:0007669"/>
    <property type="project" value="InterPro"/>
</dbReference>
<dbReference type="CDD" id="cd11049">
    <property type="entry name" value="CYP170A1-like"/>
    <property type="match status" value="1"/>
</dbReference>
<dbReference type="Gene3D" id="1.10.630.10">
    <property type="entry name" value="Cytochrome P450"/>
    <property type="match status" value="1"/>
</dbReference>
<dbReference type="InterPro" id="IPR001128">
    <property type="entry name" value="Cyt_P450"/>
</dbReference>
<dbReference type="InterPro" id="IPR017972">
    <property type="entry name" value="Cyt_P450_CS"/>
</dbReference>
<dbReference type="InterPro" id="IPR002403">
    <property type="entry name" value="Cyt_P450_E_grp-IV"/>
</dbReference>
<dbReference type="InterPro" id="IPR036396">
    <property type="entry name" value="Cyt_P450_sf"/>
</dbReference>
<dbReference type="InterPro" id="IPR050196">
    <property type="entry name" value="Cytochrome_P450_Monoox"/>
</dbReference>
<dbReference type="PANTHER" id="PTHR24291:SF50">
    <property type="entry name" value="BIFUNCTIONAL ALBAFLAVENONE MONOOXYGENASE_TERPENE SYNTHASE"/>
    <property type="match status" value="1"/>
</dbReference>
<dbReference type="PANTHER" id="PTHR24291">
    <property type="entry name" value="CYTOCHROME P450 FAMILY 4"/>
    <property type="match status" value="1"/>
</dbReference>
<dbReference type="Pfam" id="PF00067">
    <property type="entry name" value="p450"/>
    <property type="match status" value="1"/>
</dbReference>
<dbReference type="PRINTS" id="PR00465">
    <property type="entry name" value="EP450IV"/>
</dbReference>
<dbReference type="PRINTS" id="PR00385">
    <property type="entry name" value="P450"/>
</dbReference>
<dbReference type="SUPFAM" id="SSF48264">
    <property type="entry name" value="Cytochrome P450"/>
    <property type="match status" value="1"/>
</dbReference>
<dbReference type="PROSITE" id="PS00086">
    <property type="entry name" value="CYTOCHROME_P450"/>
    <property type="match status" value="1"/>
</dbReference>
<keyword id="KW-0349">Heme</keyword>
<keyword id="KW-0408">Iron</keyword>
<keyword id="KW-0479">Metal-binding</keyword>
<keyword id="KW-0503">Monooxygenase</keyword>
<keyword id="KW-0560">Oxidoreductase</keyword>
<comment type="function">
    <text evidence="3">Involved in the biosynthesis of cyclooctatin, a potent inhibitor of lysophospholipase. Catalyzes the hydroxylation of cyclooctat-9-ene-5,7-diol at C-18 to yield the final product, cyclooctatin.</text>
</comment>
<comment type="catalytic activity">
    <reaction evidence="3 4">
        <text>cyclooctat-9-ene-5,7-diol + AH2 + O2 = cyclooctatin + A + H2O</text>
        <dbReference type="Rhea" id="RHEA:56824"/>
        <dbReference type="ChEBI" id="CHEBI:13193"/>
        <dbReference type="ChEBI" id="CHEBI:15377"/>
        <dbReference type="ChEBI" id="CHEBI:15379"/>
        <dbReference type="ChEBI" id="CHEBI:17499"/>
        <dbReference type="ChEBI" id="CHEBI:78370"/>
        <dbReference type="ChEBI" id="CHEBI:141020"/>
        <dbReference type="EC" id="1.14.99.62"/>
    </reaction>
    <physiologicalReaction direction="left-to-right" evidence="3 4">
        <dbReference type="Rhea" id="RHEA:56825"/>
    </physiologicalReaction>
</comment>
<comment type="cofactor">
    <cofactor evidence="1">
        <name>heme</name>
        <dbReference type="ChEBI" id="CHEBI:30413"/>
    </cofactor>
</comment>
<comment type="similarity">
    <text evidence="2">Belongs to the cytochrome P450 family.</text>
</comment>
<organism>
    <name type="scientific">Streptomyces melanosporofaciens</name>
    <dbReference type="NCBI Taxonomy" id="67327"/>
    <lineage>
        <taxon>Bacteria</taxon>
        <taxon>Bacillati</taxon>
        <taxon>Actinomycetota</taxon>
        <taxon>Actinomycetes</taxon>
        <taxon>Kitasatosporales</taxon>
        <taxon>Streptomycetaceae</taxon>
        <taxon>Streptomyces</taxon>
        <taxon>Streptomyces violaceusniger group</taxon>
    </lineage>
</organism>
<reference key="1">
    <citation type="journal article" date="2009" name="Chem. Biol.">
        <title>Cloning and heterologous expression of the cyclooctatin biosynthetic gene cluster afford a diterpene cyclase and two p450 hydroxylases.</title>
        <authorList>
            <person name="Kim S.Y."/>
            <person name="Zhao P."/>
            <person name="Igarashi M."/>
            <person name="Sawa R."/>
            <person name="Tomita T."/>
            <person name="Nishiyama M."/>
            <person name="Kuzuyama T."/>
        </authorList>
    </citation>
    <scope>NUCLEOTIDE SEQUENCE [GENOMIC DNA]</scope>
    <scope>FUNCTION</scope>
    <scope>CATALYTIC ACTIVITY</scope>
    <source>
        <strain>MI614-43F2</strain>
    </source>
</reference>
<reference key="2">
    <citation type="journal article" date="2016" name="Microb. Cell Fact.">
        <title>Identification, characterization and molecular adaptation of class I redox systems for the production of hydroxylated diterpenoids.</title>
        <authorList>
            <person name="Goerner C."/>
            <person name="Schrepfer P."/>
            <person name="Redai V."/>
            <person name="Wallrapp F."/>
            <person name="Loll B."/>
            <person name="Eisenreich W."/>
            <person name="Haslbeck M."/>
            <person name="Brueck T."/>
        </authorList>
    </citation>
    <scope>CATALYTIC ACTIVITY</scope>
</reference>
<feature type="chain" id="PRO_0000452044" description="Cyclooctatin synthase">
    <location>
        <begin position="1"/>
        <end position="459"/>
    </location>
</feature>
<feature type="binding site" description="axial binding residue" evidence="1">
    <location>
        <position position="408"/>
    </location>
    <ligand>
        <name>heme</name>
        <dbReference type="ChEBI" id="CHEBI:30413"/>
    </ligand>
    <ligandPart>
        <name>Fe</name>
        <dbReference type="ChEBI" id="CHEBI:18248"/>
    </ligandPart>
</feature>
<sequence>MKDFFRMRTAQQPATRHWRHTVAPGGLPLAGHALLMARKPLQFLASLPAHGDLVELRLGPRPVYLPCHPELVQQVLVNARVYDTGGPVKEKAKPILGNGLITSDWADHRRQRRLVQPAFHTARIAKYAEVMERECEAESTAWTARRPIDVSHEMLALTARVTARALFSTDMAPHAVAEIQHCLPIVVEGAYRQAIDPTGLLAKLPLAANRRFDDALARLNQLIDRMIDDYKASDDGDRGDVLSALFAAQDDETGGTMSDQEIHDQVMTLLLAGIETTASALTWAWFLLGRNPGAEAALHAEVDEVLGGRAPRYADVPRLAYTQRVFSEALRLFPPAWLFTRTTTETTELGGRRLPPASDVLISPYVLHRDPALFPRPDSFDPDRWLPERAKEVTRGSYLPFGGGSRKCIGDVFGMTEATLALAAIAGRWRMRPIPGTKIRPRPQMSLTAGPLRMIPEPR</sequence>
<proteinExistence type="evidence at protein level"/>
<evidence type="ECO:0000250" key="1">
    <source>
        <dbReference type="UniProtKB" id="Q9K498"/>
    </source>
</evidence>
<evidence type="ECO:0000255" key="2">
    <source>
        <dbReference type="RuleBase" id="RU000461"/>
    </source>
</evidence>
<evidence type="ECO:0000269" key="3">
    <source>
    </source>
</evidence>
<evidence type="ECO:0000269" key="4">
    <source>
    </source>
</evidence>
<evidence type="ECO:0000303" key="5">
    <source>
    </source>
</evidence>
<evidence type="ECO:0000305" key="6"/>
<protein>
    <recommendedName>
        <fullName evidence="6">Cyclooctatin synthase</fullName>
        <ecNumber evidence="3 4">1.14.99.62</ecNumber>
    </recommendedName>
</protein>
<accession>C9K1X7</accession>
<gene>
    <name evidence="5" type="primary">cotB4</name>
</gene>
<name>COTB4_STRMJ</name>